<organism>
    <name type="scientific">Aquifex aeolicus (strain VF5)</name>
    <dbReference type="NCBI Taxonomy" id="224324"/>
    <lineage>
        <taxon>Bacteria</taxon>
        <taxon>Pseudomonadati</taxon>
        <taxon>Aquificota</taxon>
        <taxon>Aquificia</taxon>
        <taxon>Aquificales</taxon>
        <taxon>Aquificaceae</taxon>
        <taxon>Aquifex</taxon>
    </lineage>
</organism>
<feature type="chain" id="PRO_0000139601" description="Hypoxanthine-guanine phosphoribosyltransferase">
    <location>
        <begin position="1"/>
        <end position="178"/>
    </location>
</feature>
<feature type="active site" description="Proton acceptor" evidence="1">
    <location>
        <position position="106"/>
    </location>
</feature>
<feature type="binding site" evidence="2">
    <location>
        <position position="46"/>
    </location>
    <ligand>
        <name>diphosphate</name>
        <dbReference type="ChEBI" id="CHEBI:33019"/>
    </ligand>
</feature>
<feature type="binding site" evidence="2">
    <location>
        <position position="47"/>
    </location>
    <ligand>
        <name>diphosphate</name>
        <dbReference type="ChEBI" id="CHEBI:33019"/>
    </ligand>
</feature>
<feature type="binding site" evidence="2">
    <location>
        <position position="103"/>
    </location>
    <ligand>
        <name>Mg(2+)</name>
        <dbReference type="ChEBI" id="CHEBI:18420"/>
    </ligand>
</feature>
<feature type="binding site" evidence="2">
    <location>
        <position position="134"/>
    </location>
    <ligand>
        <name>GMP</name>
        <dbReference type="ChEBI" id="CHEBI:58115"/>
    </ligand>
</feature>
<feature type="binding site" evidence="2">
    <location>
        <begin position="155"/>
        <end position="156"/>
    </location>
    <ligand>
        <name>GMP</name>
        <dbReference type="ChEBI" id="CHEBI:58115"/>
    </ligand>
</feature>
<feature type="binding site" evidence="2">
    <location>
        <position position="162"/>
    </location>
    <ligand>
        <name>GMP</name>
        <dbReference type="ChEBI" id="CHEBI:58115"/>
    </ligand>
</feature>
<feature type="binding site" evidence="2">
    <location>
        <position position="168"/>
    </location>
    <ligand>
        <name>diphosphate</name>
        <dbReference type="ChEBI" id="CHEBI:33019"/>
    </ligand>
</feature>
<keyword id="KW-0963">Cytoplasm</keyword>
<keyword id="KW-0328">Glycosyltransferase</keyword>
<keyword id="KW-0460">Magnesium</keyword>
<keyword id="KW-0479">Metal-binding</keyword>
<keyword id="KW-0547">Nucleotide-binding</keyword>
<keyword id="KW-0660">Purine salvage</keyword>
<keyword id="KW-1185">Reference proteome</keyword>
<keyword id="KW-0808">Transferase</keyword>
<protein>
    <recommendedName>
        <fullName>Hypoxanthine-guanine phosphoribosyltransferase</fullName>
        <shortName>HGPRT</shortName>
        <shortName>HGPRTase</shortName>
        <ecNumber evidence="2">2.4.2.8</ecNumber>
    </recommendedName>
</protein>
<accession>O66821</accession>
<sequence>MKEIRGKKLKLLLKEEDIKRRVKELAKEIESSYSWEEPIVVVGLLKGAFIFLADLVRAFDRFVFVEFMQVSSYGKGMKSSGTIKIVKDLDMDIEGKEVLLVDDILDTGLTMKEIHDYLLMKKPKVLKTCVFLDKKERRKVDFNADFVGFEVPDKFLVGYGLDWGEYGRNLPEVYMVED</sequence>
<evidence type="ECO:0000250" key="1">
    <source>
        <dbReference type="UniProtKB" id="P0A9M2"/>
    </source>
</evidence>
<evidence type="ECO:0000250" key="2">
    <source>
        <dbReference type="UniProtKB" id="P9WHQ9"/>
    </source>
</evidence>
<evidence type="ECO:0000305" key="3"/>
<name>HGPRT_AQUAE</name>
<gene>
    <name type="primary">hpt</name>
    <name type="ordered locus">aq_544</name>
</gene>
<reference key="1">
    <citation type="journal article" date="1998" name="Nature">
        <title>The complete genome of the hyperthermophilic bacterium Aquifex aeolicus.</title>
        <authorList>
            <person name="Deckert G."/>
            <person name="Warren P.V."/>
            <person name="Gaasterland T."/>
            <person name="Young W.G."/>
            <person name="Lenox A.L."/>
            <person name="Graham D.E."/>
            <person name="Overbeek R."/>
            <person name="Snead M.A."/>
            <person name="Keller M."/>
            <person name="Aujay M."/>
            <person name="Huber R."/>
            <person name="Feldman R.A."/>
            <person name="Short J.M."/>
            <person name="Olsen G.J."/>
            <person name="Swanson R.V."/>
        </authorList>
    </citation>
    <scope>NUCLEOTIDE SEQUENCE [LARGE SCALE GENOMIC DNA]</scope>
    <source>
        <strain>VF5</strain>
    </source>
</reference>
<comment type="function">
    <text evidence="2">Purine salvage pathway enzyme that catalyzes the transfer of the ribosyl-5-phosphate group from 5-phospho-alpha-D-ribose 1-diphosphate (PRPP) to the N9 position of the 6-oxopurines hypoxanthine and guanine to form the corresponding ribonucleotides IMP (inosine 5'-monophosphate) and GMP (guanosine 5'-monophosphate), with the release of PPi.</text>
</comment>
<comment type="catalytic activity">
    <reaction evidence="2">
        <text>IMP + diphosphate = hypoxanthine + 5-phospho-alpha-D-ribose 1-diphosphate</text>
        <dbReference type="Rhea" id="RHEA:17973"/>
        <dbReference type="ChEBI" id="CHEBI:17368"/>
        <dbReference type="ChEBI" id="CHEBI:33019"/>
        <dbReference type="ChEBI" id="CHEBI:58017"/>
        <dbReference type="ChEBI" id="CHEBI:58053"/>
        <dbReference type="EC" id="2.4.2.8"/>
    </reaction>
    <physiologicalReaction direction="right-to-left" evidence="2">
        <dbReference type="Rhea" id="RHEA:17975"/>
    </physiologicalReaction>
</comment>
<comment type="catalytic activity">
    <reaction evidence="2">
        <text>GMP + diphosphate = guanine + 5-phospho-alpha-D-ribose 1-diphosphate</text>
        <dbReference type="Rhea" id="RHEA:25424"/>
        <dbReference type="ChEBI" id="CHEBI:16235"/>
        <dbReference type="ChEBI" id="CHEBI:33019"/>
        <dbReference type="ChEBI" id="CHEBI:58017"/>
        <dbReference type="ChEBI" id="CHEBI:58115"/>
        <dbReference type="EC" id="2.4.2.8"/>
    </reaction>
    <physiologicalReaction direction="right-to-left" evidence="2">
        <dbReference type="Rhea" id="RHEA:25426"/>
    </physiologicalReaction>
</comment>
<comment type="cofactor">
    <cofactor evidence="2">
        <name>Mg(2+)</name>
        <dbReference type="ChEBI" id="CHEBI:18420"/>
    </cofactor>
</comment>
<comment type="pathway">
    <text evidence="2">Purine metabolism; IMP biosynthesis via salvage pathway; IMP from hypoxanthine: step 1/1.</text>
</comment>
<comment type="pathway">
    <text evidence="2">Purine metabolism; GMP biosynthesis via salvage pathway; GMP from guanine: step 1/1.</text>
</comment>
<comment type="subcellular location">
    <subcellularLocation>
        <location>Cytoplasm</location>
    </subcellularLocation>
</comment>
<comment type="similarity">
    <text evidence="3">Belongs to the purine/pyrimidine phosphoribosyltransferase family.</text>
</comment>
<proteinExistence type="inferred from homology"/>
<dbReference type="EC" id="2.4.2.8" evidence="2"/>
<dbReference type="EMBL" id="AE000657">
    <property type="protein sequence ID" value="AAC06788.1"/>
    <property type="molecule type" value="Genomic_DNA"/>
</dbReference>
<dbReference type="PIR" id="A70349">
    <property type="entry name" value="A70349"/>
</dbReference>
<dbReference type="RefSeq" id="NP_213381.1">
    <property type="nucleotide sequence ID" value="NC_000918.1"/>
</dbReference>
<dbReference type="RefSeq" id="WP_010880319.1">
    <property type="nucleotide sequence ID" value="NC_000918.1"/>
</dbReference>
<dbReference type="SMR" id="O66821"/>
<dbReference type="FunCoup" id="O66821">
    <property type="interactions" value="385"/>
</dbReference>
<dbReference type="STRING" id="224324.aq_544"/>
<dbReference type="EnsemblBacteria" id="AAC06788">
    <property type="protein sequence ID" value="AAC06788"/>
    <property type="gene ID" value="aq_544"/>
</dbReference>
<dbReference type="KEGG" id="aae:aq_544"/>
<dbReference type="PATRIC" id="fig|224324.8.peg.446"/>
<dbReference type="eggNOG" id="COG0634">
    <property type="taxonomic scope" value="Bacteria"/>
</dbReference>
<dbReference type="HOGENOM" id="CLU_073615_0_0_0"/>
<dbReference type="InParanoid" id="O66821"/>
<dbReference type="OrthoDB" id="9802824at2"/>
<dbReference type="UniPathway" id="UPA00591">
    <property type="reaction ID" value="UER00648"/>
</dbReference>
<dbReference type="UniPathway" id="UPA00909">
    <property type="reaction ID" value="UER00887"/>
</dbReference>
<dbReference type="Proteomes" id="UP000000798">
    <property type="component" value="Chromosome"/>
</dbReference>
<dbReference type="GO" id="GO:0005829">
    <property type="term" value="C:cytosol"/>
    <property type="evidence" value="ECO:0000318"/>
    <property type="project" value="GO_Central"/>
</dbReference>
<dbReference type="GO" id="GO:0052657">
    <property type="term" value="F:guanine phosphoribosyltransferase activity"/>
    <property type="evidence" value="ECO:0007669"/>
    <property type="project" value="RHEA"/>
</dbReference>
<dbReference type="GO" id="GO:0004422">
    <property type="term" value="F:hypoxanthine phosphoribosyltransferase activity"/>
    <property type="evidence" value="ECO:0000318"/>
    <property type="project" value="GO_Central"/>
</dbReference>
<dbReference type="GO" id="GO:0000287">
    <property type="term" value="F:magnesium ion binding"/>
    <property type="evidence" value="ECO:0000318"/>
    <property type="project" value="GO_Central"/>
</dbReference>
<dbReference type="GO" id="GO:0000166">
    <property type="term" value="F:nucleotide binding"/>
    <property type="evidence" value="ECO:0007669"/>
    <property type="project" value="UniProtKB-KW"/>
</dbReference>
<dbReference type="GO" id="GO:0032263">
    <property type="term" value="P:GMP salvage"/>
    <property type="evidence" value="ECO:0000318"/>
    <property type="project" value="GO_Central"/>
</dbReference>
<dbReference type="GO" id="GO:0006178">
    <property type="term" value="P:guanine salvage"/>
    <property type="evidence" value="ECO:0000318"/>
    <property type="project" value="GO_Central"/>
</dbReference>
<dbReference type="GO" id="GO:0046100">
    <property type="term" value="P:hypoxanthine metabolic process"/>
    <property type="evidence" value="ECO:0000318"/>
    <property type="project" value="GO_Central"/>
</dbReference>
<dbReference type="GO" id="GO:0032264">
    <property type="term" value="P:IMP salvage"/>
    <property type="evidence" value="ECO:0000318"/>
    <property type="project" value="GO_Central"/>
</dbReference>
<dbReference type="GO" id="GO:0006166">
    <property type="term" value="P:purine ribonucleoside salvage"/>
    <property type="evidence" value="ECO:0007669"/>
    <property type="project" value="UniProtKB-KW"/>
</dbReference>
<dbReference type="CDD" id="cd06223">
    <property type="entry name" value="PRTases_typeI"/>
    <property type="match status" value="1"/>
</dbReference>
<dbReference type="FunFam" id="3.40.50.2020:FF:000006">
    <property type="entry name" value="Hypoxanthine phosphoribosyltransferase"/>
    <property type="match status" value="1"/>
</dbReference>
<dbReference type="Gene3D" id="3.40.50.2020">
    <property type="match status" value="1"/>
</dbReference>
<dbReference type="InterPro" id="IPR050408">
    <property type="entry name" value="HGPRT"/>
</dbReference>
<dbReference type="InterPro" id="IPR005904">
    <property type="entry name" value="Hxn_phspho_trans"/>
</dbReference>
<dbReference type="InterPro" id="IPR000836">
    <property type="entry name" value="PRibTrfase_dom"/>
</dbReference>
<dbReference type="InterPro" id="IPR029057">
    <property type="entry name" value="PRTase-like"/>
</dbReference>
<dbReference type="NCBIfam" id="TIGR01203">
    <property type="entry name" value="HGPRTase"/>
    <property type="match status" value="1"/>
</dbReference>
<dbReference type="PANTHER" id="PTHR43340:SF1">
    <property type="entry name" value="HYPOXANTHINE PHOSPHORIBOSYLTRANSFERASE"/>
    <property type="match status" value="1"/>
</dbReference>
<dbReference type="PANTHER" id="PTHR43340">
    <property type="entry name" value="HYPOXANTHINE-GUANINE PHOSPHORIBOSYLTRANSFERASE"/>
    <property type="match status" value="1"/>
</dbReference>
<dbReference type="Pfam" id="PF00156">
    <property type="entry name" value="Pribosyltran"/>
    <property type="match status" value="1"/>
</dbReference>
<dbReference type="SUPFAM" id="SSF53271">
    <property type="entry name" value="PRTase-like"/>
    <property type="match status" value="1"/>
</dbReference>
<dbReference type="PROSITE" id="PS00103">
    <property type="entry name" value="PUR_PYR_PR_TRANSFER"/>
    <property type="match status" value="1"/>
</dbReference>